<keyword id="KW-0010">Activator</keyword>
<keyword id="KW-0539">Nucleus</keyword>
<keyword id="KW-1185">Reference proteome</keyword>
<keyword id="KW-0804">Transcription</keyword>
<keyword id="KW-0805">Transcription regulation</keyword>
<reference key="1">
    <citation type="submission" date="2004-06" db="EMBL/GenBank/DDBJ databases">
        <authorList>
            <consortium name="NIH - Xenopus Gene Collection (XGC) project"/>
        </authorList>
    </citation>
    <scope>NUCLEOTIDE SEQUENCE [LARGE SCALE MRNA]</scope>
    <source>
        <tissue>Ovary</tissue>
    </source>
</reference>
<dbReference type="EMBL" id="BC073041">
    <property type="protein sequence ID" value="AAH73041.1"/>
    <property type="molecule type" value="mRNA"/>
</dbReference>
<dbReference type="RefSeq" id="NP_001085624.1">
    <property type="nucleotide sequence ID" value="NM_001092155.1"/>
</dbReference>
<dbReference type="SMR" id="Q6GPR9"/>
<dbReference type="DNASU" id="444050"/>
<dbReference type="GeneID" id="444050"/>
<dbReference type="KEGG" id="xla:444050"/>
<dbReference type="AGR" id="Xenbase:XB-GENE-17338876"/>
<dbReference type="CTD" id="444050"/>
<dbReference type="Xenbase" id="XB-GENE-17338876">
    <property type="gene designation" value="med7.S"/>
</dbReference>
<dbReference type="OrthoDB" id="10253553at2759"/>
<dbReference type="Proteomes" id="UP000186698">
    <property type="component" value="Chromosome 3S"/>
</dbReference>
<dbReference type="Bgee" id="444050">
    <property type="expression patterns" value="Expressed in testis and 19 other cell types or tissues"/>
</dbReference>
<dbReference type="GO" id="GO:0016592">
    <property type="term" value="C:mediator complex"/>
    <property type="evidence" value="ECO:0007669"/>
    <property type="project" value="InterPro"/>
</dbReference>
<dbReference type="GO" id="GO:0003712">
    <property type="term" value="F:transcription coregulator activity"/>
    <property type="evidence" value="ECO:0007669"/>
    <property type="project" value="InterPro"/>
</dbReference>
<dbReference type="GO" id="GO:0006357">
    <property type="term" value="P:regulation of transcription by RNA polymerase II"/>
    <property type="evidence" value="ECO:0007669"/>
    <property type="project" value="InterPro"/>
</dbReference>
<dbReference type="Gene3D" id="6.10.140.200">
    <property type="match status" value="1"/>
</dbReference>
<dbReference type="InterPro" id="IPR051669">
    <property type="entry name" value="Immune_Mod/Transcr_Coactivator"/>
</dbReference>
<dbReference type="InterPro" id="IPR037212">
    <property type="entry name" value="Med7/Med21-like"/>
</dbReference>
<dbReference type="InterPro" id="IPR009244">
    <property type="entry name" value="Mediatior_Med7"/>
</dbReference>
<dbReference type="InterPro" id="IPR044888">
    <property type="entry name" value="Mediatior_Med7_sf"/>
</dbReference>
<dbReference type="PANTHER" id="PTHR15498:SF72">
    <property type="entry name" value="MEDIATOR OF RNA POLYMERASE II TRANSCRIPTION SUBUNIT 7"/>
    <property type="match status" value="1"/>
</dbReference>
<dbReference type="PANTHER" id="PTHR15498">
    <property type="entry name" value="T-CELL IMMUNOGLOBULIN AND MUCIN DOMAIN CONTAINING TIM"/>
    <property type="match status" value="1"/>
</dbReference>
<dbReference type="Pfam" id="PF05983">
    <property type="entry name" value="Med7"/>
    <property type="match status" value="1"/>
</dbReference>
<dbReference type="SUPFAM" id="SSF140718">
    <property type="entry name" value="Mediator hinge subcomplex-like"/>
    <property type="match status" value="1"/>
</dbReference>
<name>MED7B_XENLA</name>
<accession>Q6GPR9</accession>
<organism>
    <name type="scientific">Xenopus laevis</name>
    <name type="common">African clawed frog</name>
    <dbReference type="NCBI Taxonomy" id="8355"/>
    <lineage>
        <taxon>Eukaryota</taxon>
        <taxon>Metazoa</taxon>
        <taxon>Chordata</taxon>
        <taxon>Craniata</taxon>
        <taxon>Vertebrata</taxon>
        <taxon>Euteleostomi</taxon>
        <taxon>Amphibia</taxon>
        <taxon>Batrachia</taxon>
        <taxon>Anura</taxon>
        <taxon>Pipoidea</taxon>
        <taxon>Pipidae</taxon>
        <taxon>Xenopodinae</taxon>
        <taxon>Xenopus</taxon>
        <taxon>Xenopus</taxon>
    </lineage>
</organism>
<protein>
    <recommendedName>
        <fullName>Mediator of RNA polymerase II transcription subunit 7-B</fullName>
    </recommendedName>
    <alternativeName>
        <fullName>Cofactor required for Sp1 transcriptional activation subunit 9-B</fullName>
        <shortName>CRSP complex subunit 9-B</shortName>
    </alternativeName>
    <alternativeName>
        <fullName>Mediator complex subunit 7-B</fullName>
    </alternativeName>
</protein>
<evidence type="ECO:0000250" key="1"/>
<evidence type="ECO:0000305" key="2"/>
<feature type="chain" id="PRO_0000303183" description="Mediator of RNA polymerase II transcription subunit 7-B">
    <location>
        <begin position="1"/>
        <end position="228"/>
    </location>
</feature>
<sequence>MGEPQQVSALPIPPMQYIKEYTDENIRKGLAPKPPLPINDSYMMFGNQFQCDDLIIRPLETQGIERLHPVQFDHKKELRKLLMSILVNFLDMLDILIRSPGSIRREEKLEDIKLLFVHMHHLINEYRPHQARETLRVMMEVQKRQRLETAERFQKHLERVVEMIQNCLASLPDDLPLPNGADSVKTEPMDVQEPCTDHYKGSQEAAASMKEATIDKDAAMCVIIDEMT</sequence>
<gene>
    <name type="primary">med7-b</name>
    <name type="synonym">crsp9-b</name>
</gene>
<proteinExistence type="evidence at transcript level"/>
<comment type="function">
    <text evidence="1">Component of the Mediator complex, a coactivator involved in the regulated transcription of nearly all RNA polymerase II-dependent genes. Mediator functions as a bridge to convey information from gene-specific regulatory proteins to the basal RNA polymerase II transcription machinery. Mediator is recruited to promoters by direct interactions with regulatory proteins and serves as a scaffold for the assembly of a functional preinitiation complex with RNA polymerase II and the general transcription factors (By similarity).</text>
</comment>
<comment type="subunit">
    <text evidence="1">Component of the Mediator complex.</text>
</comment>
<comment type="subcellular location">
    <subcellularLocation>
        <location evidence="1">Nucleus</location>
    </subcellularLocation>
</comment>
<comment type="similarity">
    <text evidence="2">Belongs to the Mediator complex subunit 7 family.</text>
</comment>